<proteinExistence type="evidence at transcript level"/>
<accession>Q28H87</accession>
<feature type="chain" id="PRO_0000287278" description="Pre-mRNA-splicing factor 38A">
    <location>
        <begin position="1"/>
        <end position="312"/>
    </location>
</feature>
<feature type="region of interest" description="N-terminal protein interaction domain" evidence="1">
    <location>
        <begin position="1"/>
        <end position="179"/>
    </location>
</feature>
<feature type="region of interest" description="Disordered" evidence="2">
    <location>
        <begin position="180"/>
        <end position="312"/>
    </location>
</feature>
<feature type="compositionally biased region" description="Acidic residues" evidence="2">
    <location>
        <begin position="184"/>
        <end position="201"/>
    </location>
</feature>
<feature type="compositionally biased region" description="Basic and acidic residues" evidence="2">
    <location>
        <begin position="202"/>
        <end position="223"/>
    </location>
</feature>
<feature type="compositionally biased region" description="Basic residues" evidence="2">
    <location>
        <begin position="224"/>
        <end position="294"/>
    </location>
</feature>
<feature type="compositionally biased region" description="Basic residues" evidence="2">
    <location>
        <begin position="301"/>
        <end position="312"/>
    </location>
</feature>
<dbReference type="EMBL" id="CR760991">
    <property type="protein sequence ID" value="CAJ82119.1"/>
    <property type="molecule type" value="mRNA"/>
</dbReference>
<dbReference type="RefSeq" id="NP_001017140.1">
    <property type="nucleotide sequence ID" value="NM_001017140.2"/>
</dbReference>
<dbReference type="SMR" id="Q28H87"/>
<dbReference type="FunCoup" id="Q28H87">
    <property type="interactions" value="3221"/>
</dbReference>
<dbReference type="STRING" id="8364.ENSXETP00000016517"/>
<dbReference type="PaxDb" id="8364-ENSXETP00000052923"/>
<dbReference type="GeneID" id="549894"/>
<dbReference type="KEGG" id="xtr:549894"/>
<dbReference type="AGR" id="Xenbase:XB-GENE-979997"/>
<dbReference type="CTD" id="84950"/>
<dbReference type="Xenbase" id="XB-GENE-979997">
    <property type="gene designation" value="prpf38a"/>
</dbReference>
<dbReference type="eggNOG" id="KOG2889">
    <property type="taxonomic scope" value="Eukaryota"/>
</dbReference>
<dbReference type="HOGENOM" id="CLU_039466_2_0_1"/>
<dbReference type="InParanoid" id="Q28H87"/>
<dbReference type="OMA" id="HTYWKEQ"/>
<dbReference type="OrthoDB" id="190958at2759"/>
<dbReference type="PhylomeDB" id="Q28H87"/>
<dbReference type="TreeFam" id="TF105910"/>
<dbReference type="Proteomes" id="UP000008143">
    <property type="component" value="Chromosome 4"/>
</dbReference>
<dbReference type="Bgee" id="ENSXETG00000008060">
    <property type="expression patterns" value="Expressed in ovary and 13 other cell types or tissues"/>
</dbReference>
<dbReference type="ExpressionAtlas" id="Q28H87">
    <property type="expression patterns" value="baseline and differential"/>
</dbReference>
<dbReference type="GO" id="GO:0005634">
    <property type="term" value="C:nucleus"/>
    <property type="evidence" value="ECO:0000250"/>
    <property type="project" value="UniProtKB"/>
</dbReference>
<dbReference type="GO" id="GO:0071005">
    <property type="term" value="C:U2-type precatalytic spliceosome"/>
    <property type="evidence" value="ECO:0000250"/>
    <property type="project" value="UniProtKB"/>
</dbReference>
<dbReference type="GO" id="GO:0000398">
    <property type="term" value="P:mRNA splicing, via spliceosome"/>
    <property type="evidence" value="ECO:0000250"/>
    <property type="project" value="UniProtKB"/>
</dbReference>
<dbReference type="InterPro" id="IPR005037">
    <property type="entry name" value="PRP38"/>
</dbReference>
<dbReference type="PANTHER" id="PTHR23142">
    <property type="entry name" value="PRE-MRNA-SPLICING FACTOR 38A-RELATED"/>
    <property type="match status" value="1"/>
</dbReference>
<dbReference type="Pfam" id="PF03371">
    <property type="entry name" value="PRP38"/>
    <property type="match status" value="1"/>
</dbReference>
<organism>
    <name type="scientific">Xenopus tropicalis</name>
    <name type="common">Western clawed frog</name>
    <name type="synonym">Silurana tropicalis</name>
    <dbReference type="NCBI Taxonomy" id="8364"/>
    <lineage>
        <taxon>Eukaryota</taxon>
        <taxon>Metazoa</taxon>
        <taxon>Chordata</taxon>
        <taxon>Craniata</taxon>
        <taxon>Vertebrata</taxon>
        <taxon>Euteleostomi</taxon>
        <taxon>Amphibia</taxon>
        <taxon>Batrachia</taxon>
        <taxon>Anura</taxon>
        <taxon>Pipoidea</taxon>
        <taxon>Pipidae</taxon>
        <taxon>Xenopodinae</taxon>
        <taxon>Xenopus</taxon>
        <taxon>Silurana</taxon>
    </lineage>
</organism>
<comment type="function">
    <text evidence="1">Involved in pre-mRNA splicing as a component of the spliceosome.</text>
</comment>
<comment type="subunit">
    <text evidence="1">Component of the spliceosome B complex.</text>
</comment>
<comment type="subcellular location">
    <subcellularLocation>
        <location evidence="1">Nucleus</location>
    </subcellularLocation>
</comment>
<comment type="similarity">
    <text evidence="3">Belongs to the PRP38 family.</text>
</comment>
<name>PR38A_XENTR</name>
<reference key="1">
    <citation type="submission" date="2006-10" db="EMBL/GenBank/DDBJ databases">
        <authorList>
            <consortium name="Sanger Xenopus tropicalis EST/cDNA project"/>
        </authorList>
    </citation>
    <scope>NUCLEOTIDE SEQUENCE [LARGE SCALE MRNA]</scope>
    <source>
        <tissue>Egg</tissue>
    </source>
</reference>
<gene>
    <name type="primary">prpf38a</name>
    <name type="ORF">TEgg055l14.1</name>
</gene>
<protein>
    <recommendedName>
        <fullName>Pre-mRNA-splicing factor 38A</fullName>
    </recommendedName>
</protein>
<keyword id="KW-0507">mRNA processing</keyword>
<keyword id="KW-0508">mRNA splicing</keyword>
<keyword id="KW-0539">Nucleus</keyword>
<keyword id="KW-1185">Reference proteome</keyword>
<keyword id="KW-0747">Spliceosome</keyword>
<evidence type="ECO:0000250" key="1">
    <source>
        <dbReference type="UniProtKB" id="Q8NAV1"/>
    </source>
</evidence>
<evidence type="ECO:0000256" key="2">
    <source>
        <dbReference type="SAM" id="MobiDB-lite"/>
    </source>
</evidence>
<evidence type="ECO:0000305" key="3"/>
<sequence length="312" mass="37353">MANRTVKDAHSVHGTNPQYLVEKIIRTRIYESKYWKEECFGLTAELVVDKAMELKYVGGVYGGNIKPTPFLCLTLKMLQIQPEKDIIVEFIKNEDFKYVRTLGALYMRLTGTATDCYKYLEPLYNDYRKVKVQNRNGEFELMHVDEFIDQLLHEERVCDVILPRLQKRFVLEETEQLDPRVSALEEDMDDVESSEEEEDEDEKGRDPSPEHHRRNYRDLDRPRRSPSPRYRRSRSRSPRRRSRSPKRRSPSPPRRERHRSKSPRRHRSRSRERRHRSKSKSPGHHRSHRHRSHSKSPERSKKSHKKSRRGNE</sequence>